<comment type="function">
    <text evidence="1">Cell wall formation.</text>
</comment>
<comment type="catalytic activity">
    <reaction evidence="1">
        <text>UDP-N-acetyl-alpha-D-muramate + NADP(+) = UDP-N-acetyl-3-O-(1-carboxyvinyl)-alpha-D-glucosamine + NADPH + H(+)</text>
        <dbReference type="Rhea" id="RHEA:12248"/>
        <dbReference type="ChEBI" id="CHEBI:15378"/>
        <dbReference type="ChEBI" id="CHEBI:57783"/>
        <dbReference type="ChEBI" id="CHEBI:58349"/>
        <dbReference type="ChEBI" id="CHEBI:68483"/>
        <dbReference type="ChEBI" id="CHEBI:70757"/>
        <dbReference type="EC" id="1.3.1.98"/>
    </reaction>
</comment>
<comment type="cofactor">
    <cofactor evidence="1">
        <name>FAD</name>
        <dbReference type="ChEBI" id="CHEBI:57692"/>
    </cofactor>
</comment>
<comment type="pathway">
    <text evidence="1">Cell wall biogenesis; peptidoglycan biosynthesis.</text>
</comment>
<comment type="subcellular location">
    <subcellularLocation>
        <location evidence="1">Cytoplasm</location>
    </subcellularLocation>
</comment>
<comment type="similarity">
    <text evidence="1">Belongs to the MurB family.</text>
</comment>
<reference key="1">
    <citation type="journal article" date="2005" name="Nat. Biotechnol.">
        <title>The complete genome sequence of the meat-borne lactic acid bacterium Lactobacillus sakei 23K.</title>
        <authorList>
            <person name="Chaillou S."/>
            <person name="Champomier-Verges M.-C."/>
            <person name="Cornet M."/>
            <person name="Crutz-Le Coq A.-M."/>
            <person name="Dudez A.-M."/>
            <person name="Martin V."/>
            <person name="Beaufils S."/>
            <person name="Darbon-Rongere E."/>
            <person name="Bossy R."/>
            <person name="Loux V."/>
            <person name="Zagorec M."/>
        </authorList>
    </citation>
    <scope>NUCLEOTIDE SEQUENCE [LARGE SCALE GENOMIC DNA]</scope>
    <source>
        <strain>23K</strain>
    </source>
</reference>
<keyword id="KW-0131">Cell cycle</keyword>
<keyword id="KW-0132">Cell division</keyword>
<keyword id="KW-0133">Cell shape</keyword>
<keyword id="KW-0961">Cell wall biogenesis/degradation</keyword>
<keyword id="KW-0963">Cytoplasm</keyword>
<keyword id="KW-0274">FAD</keyword>
<keyword id="KW-0285">Flavoprotein</keyword>
<keyword id="KW-0521">NADP</keyword>
<keyword id="KW-0560">Oxidoreductase</keyword>
<keyword id="KW-0573">Peptidoglycan synthesis</keyword>
<keyword id="KW-1185">Reference proteome</keyword>
<gene>
    <name evidence="1" type="primary">murB</name>
    <name type="ordered locus">LCA_1337</name>
</gene>
<proteinExistence type="inferred from homology"/>
<protein>
    <recommendedName>
        <fullName evidence="1">UDP-N-acetylenolpyruvoylglucosamine reductase</fullName>
        <ecNumber evidence="1">1.3.1.98</ecNumber>
    </recommendedName>
    <alternativeName>
        <fullName evidence="1">UDP-N-acetylmuramate dehydrogenase</fullName>
    </alternativeName>
</protein>
<feature type="chain" id="PRO_0000224690" description="UDP-N-acetylenolpyruvoylglucosamine reductase">
    <location>
        <begin position="1"/>
        <end position="303"/>
    </location>
</feature>
<feature type="domain" description="FAD-binding PCMH-type" evidence="1">
    <location>
        <begin position="30"/>
        <end position="195"/>
    </location>
</feature>
<feature type="active site" evidence="1">
    <location>
        <position position="174"/>
    </location>
</feature>
<feature type="active site" description="Proton donor" evidence="1">
    <location>
        <position position="224"/>
    </location>
</feature>
<feature type="active site" evidence="1">
    <location>
        <position position="294"/>
    </location>
</feature>
<evidence type="ECO:0000255" key="1">
    <source>
        <dbReference type="HAMAP-Rule" id="MF_00037"/>
    </source>
</evidence>
<organism>
    <name type="scientific">Latilactobacillus sakei subsp. sakei (strain 23K)</name>
    <name type="common">Lactobacillus sakei subsp. sakei</name>
    <dbReference type="NCBI Taxonomy" id="314315"/>
    <lineage>
        <taxon>Bacteria</taxon>
        <taxon>Bacillati</taxon>
        <taxon>Bacillota</taxon>
        <taxon>Bacilli</taxon>
        <taxon>Lactobacillales</taxon>
        <taxon>Lactobacillaceae</taxon>
        <taxon>Latilactobacillus</taxon>
    </lineage>
</organism>
<dbReference type="EC" id="1.3.1.98" evidence="1"/>
<dbReference type="EMBL" id="CR936503">
    <property type="protein sequence ID" value="CAI55641.1"/>
    <property type="molecule type" value="Genomic_DNA"/>
</dbReference>
<dbReference type="RefSeq" id="WP_011375032.1">
    <property type="nucleotide sequence ID" value="NC_007576.1"/>
</dbReference>
<dbReference type="SMR" id="Q38VZ2"/>
<dbReference type="STRING" id="314315.LCA_1337"/>
<dbReference type="KEGG" id="lsa:LCA_1337"/>
<dbReference type="eggNOG" id="COG0812">
    <property type="taxonomic scope" value="Bacteria"/>
</dbReference>
<dbReference type="HOGENOM" id="CLU_035304_1_1_9"/>
<dbReference type="OrthoDB" id="9804753at2"/>
<dbReference type="UniPathway" id="UPA00219"/>
<dbReference type="Proteomes" id="UP000002707">
    <property type="component" value="Chromosome"/>
</dbReference>
<dbReference type="GO" id="GO:0005829">
    <property type="term" value="C:cytosol"/>
    <property type="evidence" value="ECO:0007669"/>
    <property type="project" value="TreeGrafter"/>
</dbReference>
<dbReference type="GO" id="GO:0071949">
    <property type="term" value="F:FAD binding"/>
    <property type="evidence" value="ECO:0007669"/>
    <property type="project" value="InterPro"/>
</dbReference>
<dbReference type="GO" id="GO:0008762">
    <property type="term" value="F:UDP-N-acetylmuramate dehydrogenase activity"/>
    <property type="evidence" value="ECO:0007669"/>
    <property type="project" value="UniProtKB-UniRule"/>
</dbReference>
<dbReference type="GO" id="GO:0051301">
    <property type="term" value="P:cell division"/>
    <property type="evidence" value="ECO:0007669"/>
    <property type="project" value="UniProtKB-KW"/>
</dbReference>
<dbReference type="GO" id="GO:0071555">
    <property type="term" value="P:cell wall organization"/>
    <property type="evidence" value="ECO:0007669"/>
    <property type="project" value="UniProtKB-KW"/>
</dbReference>
<dbReference type="GO" id="GO:0009252">
    <property type="term" value="P:peptidoglycan biosynthetic process"/>
    <property type="evidence" value="ECO:0007669"/>
    <property type="project" value="UniProtKB-UniRule"/>
</dbReference>
<dbReference type="GO" id="GO:0008360">
    <property type="term" value="P:regulation of cell shape"/>
    <property type="evidence" value="ECO:0007669"/>
    <property type="project" value="UniProtKB-KW"/>
</dbReference>
<dbReference type="Gene3D" id="3.30.465.10">
    <property type="match status" value="1"/>
</dbReference>
<dbReference type="Gene3D" id="3.90.78.10">
    <property type="entry name" value="UDP-N-acetylenolpyruvoylglucosamine reductase, C-terminal domain"/>
    <property type="match status" value="1"/>
</dbReference>
<dbReference type="Gene3D" id="3.30.43.10">
    <property type="entry name" value="Uridine Diphospho-n-acetylenolpyruvylglucosamine Reductase, domain 2"/>
    <property type="match status" value="1"/>
</dbReference>
<dbReference type="HAMAP" id="MF_00037">
    <property type="entry name" value="MurB"/>
    <property type="match status" value="1"/>
</dbReference>
<dbReference type="InterPro" id="IPR016166">
    <property type="entry name" value="FAD-bd_PCMH"/>
</dbReference>
<dbReference type="InterPro" id="IPR036318">
    <property type="entry name" value="FAD-bd_PCMH-like_sf"/>
</dbReference>
<dbReference type="InterPro" id="IPR016167">
    <property type="entry name" value="FAD-bd_PCMH_sub1"/>
</dbReference>
<dbReference type="InterPro" id="IPR016169">
    <property type="entry name" value="FAD-bd_PCMH_sub2"/>
</dbReference>
<dbReference type="InterPro" id="IPR003170">
    <property type="entry name" value="MurB"/>
</dbReference>
<dbReference type="InterPro" id="IPR011601">
    <property type="entry name" value="MurB_C"/>
</dbReference>
<dbReference type="InterPro" id="IPR036635">
    <property type="entry name" value="MurB_C_sf"/>
</dbReference>
<dbReference type="InterPro" id="IPR006094">
    <property type="entry name" value="Oxid_FAD_bind_N"/>
</dbReference>
<dbReference type="NCBIfam" id="TIGR00179">
    <property type="entry name" value="murB"/>
    <property type="match status" value="1"/>
</dbReference>
<dbReference type="NCBIfam" id="NF010480">
    <property type="entry name" value="PRK13905.1"/>
    <property type="match status" value="1"/>
</dbReference>
<dbReference type="PANTHER" id="PTHR21071">
    <property type="entry name" value="UDP-N-ACETYLENOLPYRUVOYLGLUCOSAMINE REDUCTASE"/>
    <property type="match status" value="1"/>
</dbReference>
<dbReference type="PANTHER" id="PTHR21071:SF4">
    <property type="entry name" value="UDP-N-ACETYLENOLPYRUVOYLGLUCOSAMINE REDUCTASE"/>
    <property type="match status" value="1"/>
</dbReference>
<dbReference type="Pfam" id="PF01565">
    <property type="entry name" value="FAD_binding_4"/>
    <property type="match status" value="1"/>
</dbReference>
<dbReference type="Pfam" id="PF02873">
    <property type="entry name" value="MurB_C"/>
    <property type="match status" value="1"/>
</dbReference>
<dbReference type="SUPFAM" id="SSF56176">
    <property type="entry name" value="FAD-binding/transporter-associated domain-like"/>
    <property type="match status" value="1"/>
</dbReference>
<dbReference type="SUPFAM" id="SSF56194">
    <property type="entry name" value="Uridine diphospho-N-Acetylenolpyruvylglucosamine reductase, MurB, C-terminal domain"/>
    <property type="match status" value="1"/>
</dbReference>
<dbReference type="PROSITE" id="PS51387">
    <property type="entry name" value="FAD_PCMH"/>
    <property type="match status" value="1"/>
</dbReference>
<name>MURB_LATSS</name>
<accession>Q38VZ2</accession>
<sequence>MLSQINAFLEANQTINVKTNEPLSKYTFTKTGGPADLLALPTSVPEVRQLLVAAKQNQLPITVIGNASNLIVRDDGISGLVIILTAMDQIDVQGTTVVAQAGAGIIQTSEAAYSGSLTGLEFAAGIPGSVGGAVFMNAGAYGGEISDVLTSAEILTQDNEIETLTNDELNFSYRHSLIQENGSIVLSARFEMAKGVAPTIREKMDELNALRAAKQPLEYPSCGSVFKRPVGHFVGPLIQKAGLQGHQIGGAQVSEKHAGFIVNRGGATATDYLTLIAYIQETIWHKFEVRLEPEVRIIGKKSE</sequence>